<sequence length="467" mass="50987">MSIGNIVQCIGAVVDIEFPRNAMPKVYDALVLEDSSETSFAEKGLTFEVQQQLGDGVVRTIALGSSDGLRRGMAVKNTEAPISVPVGQGTLGRIMDVLGRPIDEAGPIASDERRAIHQKAPKFDELSPSTDLLETGIKVIDLICPFAKGGKVGLFGGAGVGKTVNMMELINNIAKQHSGLSVFAGVGERTREGNDFYHEMKDSNVLDKVAMVFGQMNEPPGNRLRVALSGLTMAEKFRDEGRDILFFVDNIYRYTLAGTEVSALLGRMPSAVGYQPTLAEEMGKLQERITSTKTGSITSIQAVYVPADDLTDPSPATTFLHLDSTLVLSRDIAALGIYPAVDPLDSTSRQMDPQVVGQEHYNVARAVQQTLQRYKELRDIIAILGMDELSPEDKMAVNRARKIQRFLSQPFHVAEVFTGSPGKYVPLKETIRGFKMLVDGECDHLPEQAFYMVGSIDEAFEKAKKLQ</sequence>
<protein>
    <recommendedName>
        <fullName evidence="1">ATP synthase subunit beta</fullName>
        <ecNumber evidence="1">7.1.2.2</ecNumber>
    </recommendedName>
    <alternativeName>
        <fullName evidence="1">ATP synthase F1 sector subunit beta</fullName>
    </alternativeName>
    <alternativeName>
        <fullName evidence="1">F-ATPase subunit beta</fullName>
    </alternativeName>
</protein>
<organism>
    <name type="scientific">Cupriavidus pinatubonensis (strain JMP 134 / LMG 1197)</name>
    <name type="common">Cupriavidus necator (strain JMP 134)</name>
    <dbReference type="NCBI Taxonomy" id="264198"/>
    <lineage>
        <taxon>Bacteria</taxon>
        <taxon>Pseudomonadati</taxon>
        <taxon>Pseudomonadota</taxon>
        <taxon>Betaproteobacteria</taxon>
        <taxon>Burkholderiales</taxon>
        <taxon>Burkholderiaceae</taxon>
        <taxon>Cupriavidus</taxon>
    </lineage>
</organism>
<accession>Q46VY0</accession>
<feature type="chain" id="PRO_0000254347" description="ATP synthase subunit beta">
    <location>
        <begin position="1"/>
        <end position="467"/>
    </location>
</feature>
<feature type="binding site" evidence="1">
    <location>
        <begin position="156"/>
        <end position="163"/>
    </location>
    <ligand>
        <name>ATP</name>
        <dbReference type="ChEBI" id="CHEBI:30616"/>
    </ligand>
</feature>
<proteinExistence type="inferred from homology"/>
<gene>
    <name evidence="1" type="primary">atpD</name>
    <name type="ordered locus">Reut_A3346</name>
</gene>
<evidence type="ECO:0000255" key="1">
    <source>
        <dbReference type="HAMAP-Rule" id="MF_01347"/>
    </source>
</evidence>
<keyword id="KW-0066">ATP synthesis</keyword>
<keyword id="KW-0067">ATP-binding</keyword>
<keyword id="KW-0997">Cell inner membrane</keyword>
<keyword id="KW-1003">Cell membrane</keyword>
<keyword id="KW-0139">CF(1)</keyword>
<keyword id="KW-0375">Hydrogen ion transport</keyword>
<keyword id="KW-0406">Ion transport</keyword>
<keyword id="KW-0472">Membrane</keyword>
<keyword id="KW-0547">Nucleotide-binding</keyword>
<keyword id="KW-1278">Translocase</keyword>
<keyword id="KW-0813">Transport</keyword>
<comment type="function">
    <text evidence="1">Produces ATP from ADP in the presence of a proton gradient across the membrane. The catalytic sites are hosted primarily by the beta subunits.</text>
</comment>
<comment type="catalytic activity">
    <reaction evidence="1">
        <text>ATP + H2O + 4 H(+)(in) = ADP + phosphate + 5 H(+)(out)</text>
        <dbReference type="Rhea" id="RHEA:57720"/>
        <dbReference type="ChEBI" id="CHEBI:15377"/>
        <dbReference type="ChEBI" id="CHEBI:15378"/>
        <dbReference type="ChEBI" id="CHEBI:30616"/>
        <dbReference type="ChEBI" id="CHEBI:43474"/>
        <dbReference type="ChEBI" id="CHEBI:456216"/>
        <dbReference type="EC" id="7.1.2.2"/>
    </reaction>
</comment>
<comment type="subunit">
    <text evidence="1">F-type ATPases have 2 components, CF(1) - the catalytic core - and CF(0) - the membrane proton channel. CF(1) has five subunits: alpha(3), beta(3), gamma(1), delta(1), epsilon(1). CF(0) has three main subunits: a(1), b(2) and c(9-12). The alpha and beta chains form an alternating ring which encloses part of the gamma chain. CF(1) is attached to CF(0) by a central stalk formed by the gamma and epsilon chains, while a peripheral stalk is formed by the delta and b chains.</text>
</comment>
<comment type="subcellular location">
    <subcellularLocation>
        <location evidence="1">Cell inner membrane</location>
        <topology evidence="1">Peripheral membrane protein</topology>
    </subcellularLocation>
</comment>
<comment type="similarity">
    <text evidence="1">Belongs to the ATPase alpha/beta chains family.</text>
</comment>
<name>ATPB_CUPPJ</name>
<reference key="1">
    <citation type="journal article" date="2010" name="PLoS ONE">
        <title>The complete multipartite genome sequence of Cupriavidus necator JMP134, a versatile pollutant degrader.</title>
        <authorList>
            <person name="Lykidis A."/>
            <person name="Perez-Pantoja D."/>
            <person name="Ledger T."/>
            <person name="Mavromatis K."/>
            <person name="Anderson I.J."/>
            <person name="Ivanova N.N."/>
            <person name="Hooper S.D."/>
            <person name="Lapidus A."/>
            <person name="Lucas S."/>
            <person name="Gonzalez B."/>
            <person name="Kyrpides N.C."/>
        </authorList>
    </citation>
    <scope>NUCLEOTIDE SEQUENCE [LARGE SCALE GENOMIC DNA]</scope>
    <source>
        <strain>JMP134 / LMG 1197</strain>
    </source>
</reference>
<dbReference type="EC" id="7.1.2.2" evidence="1"/>
<dbReference type="EMBL" id="CP000090">
    <property type="protein sequence ID" value="AAZ62704.1"/>
    <property type="molecule type" value="Genomic_DNA"/>
</dbReference>
<dbReference type="SMR" id="Q46VY0"/>
<dbReference type="STRING" id="264198.Reut_A3346"/>
<dbReference type="KEGG" id="reu:Reut_A3346"/>
<dbReference type="eggNOG" id="COG0055">
    <property type="taxonomic scope" value="Bacteria"/>
</dbReference>
<dbReference type="HOGENOM" id="CLU_022398_0_2_4"/>
<dbReference type="OrthoDB" id="9801639at2"/>
<dbReference type="GO" id="GO:0005886">
    <property type="term" value="C:plasma membrane"/>
    <property type="evidence" value="ECO:0007669"/>
    <property type="project" value="UniProtKB-SubCell"/>
</dbReference>
<dbReference type="GO" id="GO:0045259">
    <property type="term" value="C:proton-transporting ATP synthase complex"/>
    <property type="evidence" value="ECO:0007669"/>
    <property type="project" value="UniProtKB-KW"/>
</dbReference>
<dbReference type="GO" id="GO:0005524">
    <property type="term" value="F:ATP binding"/>
    <property type="evidence" value="ECO:0007669"/>
    <property type="project" value="UniProtKB-UniRule"/>
</dbReference>
<dbReference type="GO" id="GO:0016887">
    <property type="term" value="F:ATP hydrolysis activity"/>
    <property type="evidence" value="ECO:0007669"/>
    <property type="project" value="InterPro"/>
</dbReference>
<dbReference type="GO" id="GO:0046933">
    <property type="term" value="F:proton-transporting ATP synthase activity, rotational mechanism"/>
    <property type="evidence" value="ECO:0007669"/>
    <property type="project" value="UniProtKB-UniRule"/>
</dbReference>
<dbReference type="CDD" id="cd18110">
    <property type="entry name" value="ATP-synt_F1_beta_C"/>
    <property type="match status" value="1"/>
</dbReference>
<dbReference type="CDD" id="cd18115">
    <property type="entry name" value="ATP-synt_F1_beta_N"/>
    <property type="match status" value="1"/>
</dbReference>
<dbReference type="CDD" id="cd01133">
    <property type="entry name" value="F1-ATPase_beta_CD"/>
    <property type="match status" value="1"/>
</dbReference>
<dbReference type="FunFam" id="1.10.1140.10:FF:000001">
    <property type="entry name" value="ATP synthase subunit beta"/>
    <property type="match status" value="1"/>
</dbReference>
<dbReference type="FunFam" id="3.40.50.300:FF:000004">
    <property type="entry name" value="ATP synthase subunit beta"/>
    <property type="match status" value="1"/>
</dbReference>
<dbReference type="Gene3D" id="2.40.10.170">
    <property type="match status" value="1"/>
</dbReference>
<dbReference type="Gene3D" id="1.10.1140.10">
    <property type="entry name" value="Bovine Mitochondrial F1-atpase, Atp Synthase Beta Chain, Chain D, domain 3"/>
    <property type="match status" value="1"/>
</dbReference>
<dbReference type="Gene3D" id="3.40.50.300">
    <property type="entry name" value="P-loop containing nucleotide triphosphate hydrolases"/>
    <property type="match status" value="1"/>
</dbReference>
<dbReference type="HAMAP" id="MF_01347">
    <property type="entry name" value="ATP_synth_beta_bact"/>
    <property type="match status" value="1"/>
</dbReference>
<dbReference type="InterPro" id="IPR003593">
    <property type="entry name" value="AAA+_ATPase"/>
</dbReference>
<dbReference type="InterPro" id="IPR055190">
    <property type="entry name" value="ATP-synt_VA_C"/>
</dbReference>
<dbReference type="InterPro" id="IPR005722">
    <property type="entry name" value="ATP_synth_F1_bsu"/>
</dbReference>
<dbReference type="InterPro" id="IPR020003">
    <property type="entry name" value="ATPase_a/bsu_AS"/>
</dbReference>
<dbReference type="InterPro" id="IPR050053">
    <property type="entry name" value="ATPase_alpha/beta_chains"/>
</dbReference>
<dbReference type="InterPro" id="IPR004100">
    <property type="entry name" value="ATPase_F1/V1/A1_a/bsu_N"/>
</dbReference>
<dbReference type="InterPro" id="IPR036121">
    <property type="entry name" value="ATPase_F1/V1/A1_a/bsu_N_sf"/>
</dbReference>
<dbReference type="InterPro" id="IPR000194">
    <property type="entry name" value="ATPase_F1/V1/A1_a/bsu_nucl-bd"/>
</dbReference>
<dbReference type="InterPro" id="IPR024034">
    <property type="entry name" value="ATPase_F1/V1_b/a_C"/>
</dbReference>
<dbReference type="InterPro" id="IPR027417">
    <property type="entry name" value="P-loop_NTPase"/>
</dbReference>
<dbReference type="NCBIfam" id="TIGR01039">
    <property type="entry name" value="atpD"/>
    <property type="match status" value="1"/>
</dbReference>
<dbReference type="PANTHER" id="PTHR15184">
    <property type="entry name" value="ATP SYNTHASE"/>
    <property type="match status" value="1"/>
</dbReference>
<dbReference type="PANTHER" id="PTHR15184:SF71">
    <property type="entry name" value="ATP SYNTHASE SUBUNIT BETA, MITOCHONDRIAL"/>
    <property type="match status" value="1"/>
</dbReference>
<dbReference type="Pfam" id="PF00006">
    <property type="entry name" value="ATP-synt_ab"/>
    <property type="match status" value="1"/>
</dbReference>
<dbReference type="Pfam" id="PF02874">
    <property type="entry name" value="ATP-synt_ab_N"/>
    <property type="match status" value="1"/>
</dbReference>
<dbReference type="Pfam" id="PF22919">
    <property type="entry name" value="ATP-synt_VA_C"/>
    <property type="match status" value="1"/>
</dbReference>
<dbReference type="SMART" id="SM00382">
    <property type="entry name" value="AAA"/>
    <property type="match status" value="1"/>
</dbReference>
<dbReference type="SUPFAM" id="SSF47917">
    <property type="entry name" value="C-terminal domain of alpha and beta subunits of F1 ATP synthase"/>
    <property type="match status" value="1"/>
</dbReference>
<dbReference type="SUPFAM" id="SSF50615">
    <property type="entry name" value="N-terminal domain of alpha and beta subunits of F1 ATP synthase"/>
    <property type="match status" value="1"/>
</dbReference>
<dbReference type="SUPFAM" id="SSF52540">
    <property type="entry name" value="P-loop containing nucleoside triphosphate hydrolases"/>
    <property type="match status" value="1"/>
</dbReference>
<dbReference type="PROSITE" id="PS00152">
    <property type="entry name" value="ATPASE_ALPHA_BETA"/>
    <property type="match status" value="1"/>
</dbReference>